<reference key="1">
    <citation type="journal article" date="1999" name="Nature">
        <title>Sequence and analysis of chromosome 4 of the plant Arabidopsis thaliana.</title>
        <authorList>
            <person name="Mayer K.F.X."/>
            <person name="Schueller C."/>
            <person name="Wambutt R."/>
            <person name="Murphy G."/>
            <person name="Volckaert G."/>
            <person name="Pohl T."/>
            <person name="Duesterhoeft A."/>
            <person name="Stiekema W."/>
            <person name="Entian K.-D."/>
            <person name="Terryn N."/>
            <person name="Harris B."/>
            <person name="Ansorge W."/>
            <person name="Brandt P."/>
            <person name="Grivell L.A."/>
            <person name="Rieger M."/>
            <person name="Weichselgartner M."/>
            <person name="de Simone V."/>
            <person name="Obermaier B."/>
            <person name="Mache R."/>
            <person name="Mueller M."/>
            <person name="Kreis M."/>
            <person name="Delseny M."/>
            <person name="Puigdomenech P."/>
            <person name="Watson M."/>
            <person name="Schmidtheini T."/>
            <person name="Reichert B."/>
            <person name="Portetelle D."/>
            <person name="Perez-Alonso M."/>
            <person name="Boutry M."/>
            <person name="Bancroft I."/>
            <person name="Vos P."/>
            <person name="Hoheisel J."/>
            <person name="Zimmermann W."/>
            <person name="Wedler H."/>
            <person name="Ridley P."/>
            <person name="Langham S.-A."/>
            <person name="McCullagh B."/>
            <person name="Bilham L."/>
            <person name="Robben J."/>
            <person name="van der Schueren J."/>
            <person name="Grymonprez B."/>
            <person name="Chuang Y.-J."/>
            <person name="Vandenbussche F."/>
            <person name="Braeken M."/>
            <person name="Weltjens I."/>
            <person name="Voet M."/>
            <person name="Bastiaens I."/>
            <person name="Aert R."/>
            <person name="Defoor E."/>
            <person name="Weitzenegger T."/>
            <person name="Bothe G."/>
            <person name="Ramsperger U."/>
            <person name="Hilbert H."/>
            <person name="Braun M."/>
            <person name="Holzer E."/>
            <person name="Brandt A."/>
            <person name="Peters S."/>
            <person name="van Staveren M."/>
            <person name="Dirkse W."/>
            <person name="Mooijman P."/>
            <person name="Klein Lankhorst R."/>
            <person name="Rose M."/>
            <person name="Hauf J."/>
            <person name="Koetter P."/>
            <person name="Berneiser S."/>
            <person name="Hempel S."/>
            <person name="Feldpausch M."/>
            <person name="Lamberth S."/>
            <person name="Van den Daele H."/>
            <person name="De Keyser A."/>
            <person name="Buysshaert C."/>
            <person name="Gielen J."/>
            <person name="Villarroel R."/>
            <person name="De Clercq R."/>
            <person name="van Montagu M."/>
            <person name="Rogers J."/>
            <person name="Cronin A."/>
            <person name="Quail M.A."/>
            <person name="Bray-Allen S."/>
            <person name="Clark L."/>
            <person name="Doggett J."/>
            <person name="Hall S."/>
            <person name="Kay M."/>
            <person name="Lennard N."/>
            <person name="McLay K."/>
            <person name="Mayes R."/>
            <person name="Pettett A."/>
            <person name="Rajandream M.A."/>
            <person name="Lyne M."/>
            <person name="Benes V."/>
            <person name="Rechmann S."/>
            <person name="Borkova D."/>
            <person name="Bloecker H."/>
            <person name="Scharfe M."/>
            <person name="Grimm M."/>
            <person name="Loehnert T.-H."/>
            <person name="Dose S."/>
            <person name="de Haan M."/>
            <person name="Maarse A.C."/>
            <person name="Schaefer M."/>
            <person name="Mueller-Auer S."/>
            <person name="Gabel C."/>
            <person name="Fuchs M."/>
            <person name="Fartmann B."/>
            <person name="Granderath K."/>
            <person name="Dauner D."/>
            <person name="Herzl A."/>
            <person name="Neumann S."/>
            <person name="Argiriou A."/>
            <person name="Vitale D."/>
            <person name="Liguori R."/>
            <person name="Piravandi E."/>
            <person name="Massenet O."/>
            <person name="Quigley F."/>
            <person name="Clabauld G."/>
            <person name="Muendlein A."/>
            <person name="Felber R."/>
            <person name="Schnabl S."/>
            <person name="Hiller R."/>
            <person name="Schmidt W."/>
            <person name="Lecharny A."/>
            <person name="Aubourg S."/>
            <person name="Chefdor F."/>
            <person name="Cooke R."/>
            <person name="Berger C."/>
            <person name="Monfort A."/>
            <person name="Casacuberta E."/>
            <person name="Gibbons T."/>
            <person name="Weber N."/>
            <person name="Vandenbol M."/>
            <person name="Bargues M."/>
            <person name="Terol J."/>
            <person name="Torres A."/>
            <person name="Perez-Perez A."/>
            <person name="Purnelle B."/>
            <person name="Bent E."/>
            <person name="Johnson S."/>
            <person name="Tacon D."/>
            <person name="Jesse T."/>
            <person name="Heijnen L."/>
            <person name="Schwarz S."/>
            <person name="Scholler P."/>
            <person name="Heber S."/>
            <person name="Francs P."/>
            <person name="Bielke C."/>
            <person name="Frishman D."/>
            <person name="Haase D."/>
            <person name="Lemcke K."/>
            <person name="Mewes H.-W."/>
            <person name="Stocker S."/>
            <person name="Zaccaria P."/>
            <person name="Bevan M."/>
            <person name="Wilson R.K."/>
            <person name="de la Bastide M."/>
            <person name="Habermann K."/>
            <person name="Parnell L."/>
            <person name="Dedhia N."/>
            <person name="Gnoj L."/>
            <person name="Schutz K."/>
            <person name="Huang E."/>
            <person name="Spiegel L."/>
            <person name="Sekhon M."/>
            <person name="Murray J."/>
            <person name="Sheet P."/>
            <person name="Cordes M."/>
            <person name="Abu-Threideh J."/>
            <person name="Stoneking T."/>
            <person name="Kalicki J."/>
            <person name="Graves T."/>
            <person name="Harmon G."/>
            <person name="Edwards J."/>
            <person name="Latreille P."/>
            <person name="Courtney L."/>
            <person name="Cloud J."/>
            <person name="Abbott A."/>
            <person name="Scott K."/>
            <person name="Johnson D."/>
            <person name="Minx P."/>
            <person name="Bentley D."/>
            <person name="Fulton B."/>
            <person name="Miller N."/>
            <person name="Greco T."/>
            <person name="Kemp K."/>
            <person name="Kramer J."/>
            <person name="Fulton L."/>
            <person name="Mardis E."/>
            <person name="Dante M."/>
            <person name="Pepin K."/>
            <person name="Hillier L.W."/>
            <person name="Nelson J."/>
            <person name="Spieth J."/>
            <person name="Ryan E."/>
            <person name="Andrews S."/>
            <person name="Geisel C."/>
            <person name="Layman D."/>
            <person name="Du H."/>
            <person name="Ali J."/>
            <person name="Berghoff A."/>
            <person name="Jones K."/>
            <person name="Drone K."/>
            <person name="Cotton M."/>
            <person name="Joshu C."/>
            <person name="Antonoiu B."/>
            <person name="Zidanic M."/>
            <person name="Strong C."/>
            <person name="Sun H."/>
            <person name="Lamar B."/>
            <person name="Yordan C."/>
            <person name="Ma P."/>
            <person name="Zhong J."/>
            <person name="Preston R."/>
            <person name="Vil D."/>
            <person name="Shekher M."/>
            <person name="Matero A."/>
            <person name="Shah R."/>
            <person name="Swaby I.K."/>
            <person name="O'Shaughnessy A."/>
            <person name="Rodriguez M."/>
            <person name="Hoffman J."/>
            <person name="Till S."/>
            <person name="Granat S."/>
            <person name="Shohdy N."/>
            <person name="Hasegawa A."/>
            <person name="Hameed A."/>
            <person name="Lodhi M."/>
            <person name="Johnson A."/>
            <person name="Chen E."/>
            <person name="Marra M.A."/>
            <person name="Martienssen R."/>
            <person name="McCombie W.R."/>
        </authorList>
    </citation>
    <scope>NUCLEOTIDE SEQUENCE [LARGE SCALE GENOMIC DNA]</scope>
    <source>
        <strain>cv. Columbia</strain>
    </source>
</reference>
<reference key="2">
    <citation type="journal article" date="2017" name="Plant J.">
        <title>Araport11: a complete reannotation of the Arabidopsis thaliana reference genome.</title>
        <authorList>
            <person name="Cheng C.Y."/>
            <person name="Krishnakumar V."/>
            <person name="Chan A.P."/>
            <person name="Thibaud-Nissen F."/>
            <person name="Schobel S."/>
            <person name="Town C.D."/>
        </authorList>
    </citation>
    <scope>GENOME REANNOTATION</scope>
    <source>
        <strain>cv. Columbia</strain>
    </source>
</reference>
<reference key="3">
    <citation type="journal article" date="2004" name="J. Biol. Chem.">
        <title>Arabidopsis CYP735A1 and CYP735A2 encode cytokinin hydroxylases that catalyze the biosynthesis of trans-Zeatin.</title>
        <authorList>
            <person name="Takei K."/>
            <person name="Yamaya T."/>
            <person name="Sakakibara H."/>
        </authorList>
    </citation>
    <scope>FUNCTION</scope>
</reference>
<reference key="4">
    <citation type="journal article" date="2013" name="BMC Plant Biol.">
        <title>CYP709B3, a cytochrome P450 monooxygenase gene involved in salt tolerance in Arabidopsis thaliana.</title>
        <authorList>
            <person name="Mao G."/>
            <person name="Seebeck T."/>
            <person name="Schrenker D."/>
            <person name="Yu O."/>
        </authorList>
    </citation>
    <scope>FUNCTION</scope>
    <scope>TISSUE SPECIFICITY</scope>
    <scope>INDUCTION BY SALT STRESS</scope>
    <scope>DISRUPTION PHENOTYPE</scope>
</reference>
<keyword id="KW-0349">Heme</keyword>
<keyword id="KW-0408">Iron</keyword>
<keyword id="KW-0472">Membrane</keyword>
<keyword id="KW-0479">Metal-binding</keyword>
<keyword id="KW-0503">Monooxygenase</keyword>
<keyword id="KW-0560">Oxidoreductase</keyword>
<keyword id="KW-1185">Reference proteome</keyword>
<keyword id="KW-0346">Stress response</keyword>
<keyword id="KW-0812">Transmembrane</keyword>
<keyword id="KW-1133">Transmembrane helix</keyword>
<dbReference type="EC" id="1.14.-.-" evidence="5"/>
<dbReference type="EMBL" id="AL035602">
    <property type="protein sequence ID" value="CAB38283.1"/>
    <property type="molecule type" value="Genomic_DNA"/>
</dbReference>
<dbReference type="EMBL" id="AL161571">
    <property type="protein sequence ID" value="CAB81421.1"/>
    <property type="molecule type" value="Genomic_DNA"/>
</dbReference>
<dbReference type="EMBL" id="CP002687">
    <property type="protein sequence ID" value="AEE85384.1"/>
    <property type="molecule type" value="Genomic_DNA"/>
</dbReference>
<dbReference type="PIR" id="T05876">
    <property type="entry name" value="T05876"/>
</dbReference>
<dbReference type="RefSeq" id="NP_194501.1">
    <property type="nucleotide sequence ID" value="NM_118910.4"/>
</dbReference>
<dbReference type="SMR" id="Q9T093"/>
<dbReference type="FunCoup" id="Q9T093">
    <property type="interactions" value="464"/>
</dbReference>
<dbReference type="STRING" id="3702.Q9T093"/>
<dbReference type="PaxDb" id="3702-AT4G27710.1"/>
<dbReference type="ProteomicsDB" id="240563"/>
<dbReference type="EnsemblPlants" id="AT4G27710.1">
    <property type="protein sequence ID" value="AT4G27710.1"/>
    <property type="gene ID" value="AT4G27710"/>
</dbReference>
<dbReference type="GeneID" id="828885"/>
<dbReference type="Gramene" id="AT4G27710.1">
    <property type="protein sequence ID" value="AT4G27710.1"/>
    <property type="gene ID" value="AT4G27710"/>
</dbReference>
<dbReference type="KEGG" id="ath:AT4G27710"/>
<dbReference type="Araport" id="AT4G27710"/>
<dbReference type="TAIR" id="AT4G27710">
    <property type="gene designation" value="CYP709B3"/>
</dbReference>
<dbReference type="eggNOG" id="KOG0157">
    <property type="taxonomic scope" value="Eukaryota"/>
</dbReference>
<dbReference type="HOGENOM" id="CLU_001570_5_0_1"/>
<dbReference type="InParanoid" id="Q9T093"/>
<dbReference type="OMA" id="HHEIRIA"/>
<dbReference type="PhylomeDB" id="Q9T093"/>
<dbReference type="BioCyc" id="ARA:AT4G27710-MONOMER"/>
<dbReference type="PRO" id="PR:Q9T093"/>
<dbReference type="Proteomes" id="UP000006548">
    <property type="component" value="Chromosome 4"/>
</dbReference>
<dbReference type="ExpressionAtlas" id="Q9T093">
    <property type="expression patterns" value="baseline and differential"/>
</dbReference>
<dbReference type="GO" id="GO:0016020">
    <property type="term" value="C:membrane"/>
    <property type="evidence" value="ECO:0007669"/>
    <property type="project" value="UniProtKB-SubCell"/>
</dbReference>
<dbReference type="GO" id="GO:0020037">
    <property type="term" value="F:heme binding"/>
    <property type="evidence" value="ECO:0007669"/>
    <property type="project" value="InterPro"/>
</dbReference>
<dbReference type="GO" id="GO:0005506">
    <property type="term" value="F:iron ion binding"/>
    <property type="evidence" value="ECO:0007669"/>
    <property type="project" value="InterPro"/>
</dbReference>
<dbReference type="GO" id="GO:0004497">
    <property type="term" value="F:monooxygenase activity"/>
    <property type="evidence" value="ECO:0007669"/>
    <property type="project" value="UniProtKB-KW"/>
</dbReference>
<dbReference type="GO" id="GO:0016705">
    <property type="term" value="F:oxidoreductase activity, acting on paired donors, with incorporation or reduction of molecular oxygen"/>
    <property type="evidence" value="ECO:0007669"/>
    <property type="project" value="InterPro"/>
</dbReference>
<dbReference type="GO" id="GO:0009737">
    <property type="term" value="P:response to abscisic acid"/>
    <property type="evidence" value="ECO:0000315"/>
    <property type="project" value="UniProtKB"/>
</dbReference>
<dbReference type="GO" id="GO:0009651">
    <property type="term" value="P:response to salt stress"/>
    <property type="evidence" value="ECO:0000315"/>
    <property type="project" value="TAIR"/>
</dbReference>
<dbReference type="CDD" id="cd20641">
    <property type="entry name" value="CYP709"/>
    <property type="match status" value="1"/>
</dbReference>
<dbReference type="FunFam" id="1.10.630.10:FF:000029">
    <property type="entry name" value="Cytochrome P450 734A1"/>
    <property type="match status" value="1"/>
</dbReference>
<dbReference type="Gene3D" id="1.10.630.10">
    <property type="entry name" value="Cytochrome P450"/>
    <property type="match status" value="1"/>
</dbReference>
<dbReference type="InterPro" id="IPR001128">
    <property type="entry name" value="Cyt_P450"/>
</dbReference>
<dbReference type="InterPro" id="IPR017972">
    <property type="entry name" value="Cyt_P450_CS"/>
</dbReference>
<dbReference type="InterPro" id="IPR002401">
    <property type="entry name" value="Cyt_P450_E_grp-I"/>
</dbReference>
<dbReference type="InterPro" id="IPR036396">
    <property type="entry name" value="Cyt_P450_sf"/>
</dbReference>
<dbReference type="InterPro" id="IPR050665">
    <property type="entry name" value="Cytochrome_P450_Monooxygen"/>
</dbReference>
<dbReference type="PANTHER" id="PTHR24282:SF125">
    <property type="entry name" value="CYTOCHROME P450 709B3"/>
    <property type="match status" value="1"/>
</dbReference>
<dbReference type="PANTHER" id="PTHR24282">
    <property type="entry name" value="CYTOCHROME P450 FAMILY MEMBER"/>
    <property type="match status" value="1"/>
</dbReference>
<dbReference type="Pfam" id="PF00067">
    <property type="entry name" value="p450"/>
    <property type="match status" value="1"/>
</dbReference>
<dbReference type="PRINTS" id="PR00463">
    <property type="entry name" value="EP450I"/>
</dbReference>
<dbReference type="PRINTS" id="PR00385">
    <property type="entry name" value="P450"/>
</dbReference>
<dbReference type="SUPFAM" id="SSF48264">
    <property type="entry name" value="Cytochrome P450"/>
    <property type="match status" value="1"/>
</dbReference>
<dbReference type="PROSITE" id="PS00086">
    <property type="entry name" value="CYTOCHROME_P450"/>
    <property type="match status" value="1"/>
</dbReference>
<sequence>MELISTINLLTIVLLLFVVSKIWKACWILLLRPLMLSKRFKKQGISGPKYKILYGNLSEIKKMKKEADLCVLDPNSNDIFPRVFPQYHQWMSQYGDTFLFWTGTKPTIYISNHELAKQVLSSKFGFTIIPVKRPEVFILFGKGLSFIQGDDWIRHRRILNPAFSMDRLKAMTQPMGDCTLRIFEEWRKQRRNGEVLIKIEISKEFHKLTADIIATTAFGSSYAEGIELCRSQTELEKYYISSLTNVFIPGTQYLPTPTNLKLWELHKKVKNSIKRIIDSRLKSKCKTYGYGDDLLGVMLTAAKSNEYERKMRMDEIIEECKNFYYAGQGTTSILLTWTTMLLSLHQGWQEKLREEVFNECGKDKIPDTDTFSKLKLMNMVLMESLRLYGPVIKISREATQDMKVGHLEIPKGTSIIIPLLKMHRDKAIWGEDAEQFNPLRFENGISQATIHPNALLPFSIGPRACIAKNFAMVEAKTVLTMILQQFQLSLSPEYKHTPVDHFDLFPQYGLPVMLHPLG</sequence>
<comment type="function">
    <text evidence="3 6">Plays a role in abscisic acid (ABA) and salt stress response. May regulate the salt stress response independently of well-characterized pathways (PubMed:24164720). Does not function as cytokinin hydroxylase in yeast heterologous system (Probable).</text>
</comment>
<comment type="cofactor">
    <cofactor evidence="1">
        <name>heme</name>
        <dbReference type="ChEBI" id="CHEBI:30413"/>
    </cofactor>
</comment>
<comment type="subcellular location">
    <subcellularLocation>
        <location evidence="2">Membrane</location>
        <topology evidence="2">Single-pass membrane protein</topology>
    </subcellularLocation>
</comment>
<comment type="tissue specificity">
    <text evidence="3">Highly expressed in rosette leaves and siliques, and at lower levels in flowers.</text>
</comment>
<comment type="induction">
    <text evidence="3">By salt stress.</text>
</comment>
<comment type="disruption phenotype">
    <text evidence="3">No visible phenotype under normal growth conditions, but mutant plants show increased sensitivity to abscisic acid (ABA) treatment or salt stress.</text>
</comment>
<comment type="similarity">
    <text evidence="5">Belongs to the cytochrome P450 family.</text>
</comment>
<feature type="chain" id="PRO_0000435384" description="Cytochrome P450 709B3">
    <location>
        <begin position="1"/>
        <end position="518"/>
    </location>
</feature>
<feature type="transmembrane region" description="Helical" evidence="2">
    <location>
        <begin position="3"/>
        <end position="23"/>
    </location>
</feature>
<feature type="binding site" description="axial binding residue" evidence="1">
    <location>
        <position position="465"/>
    </location>
    <ligand>
        <name>heme</name>
        <dbReference type="ChEBI" id="CHEBI:30413"/>
    </ligand>
    <ligandPart>
        <name>Fe</name>
        <dbReference type="ChEBI" id="CHEBI:18248"/>
    </ligandPart>
</feature>
<proteinExistence type="evidence at transcript level"/>
<gene>
    <name evidence="4" type="primary">CYP709B3</name>
    <name evidence="7" type="ordered locus">At4g27710</name>
</gene>
<name>C70B3_ARATH</name>
<organism>
    <name type="scientific">Arabidopsis thaliana</name>
    <name type="common">Mouse-ear cress</name>
    <dbReference type="NCBI Taxonomy" id="3702"/>
    <lineage>
        <taxon>Eukaryota</taxon>
        <taxon>Viridiplantae</taxon>
        <taxon>Streptophyta</taxon>
        <taxon>Embryophyta</taxon>
        <taxon>Tracheophyta</taxon>
        <taxon>Spermatophyta</taxon>
        <taxon>Magnoliopsida</taxon>
        <taxon>eudicotyledons</taxon>
        <taxon>Gunneridae</taxon>
        <taxon>Pentapetalae</taxon>
        <taxon>rosids</taxon>
        <taxon>malvids</taxon>
        <taxon>Brassicales</taxon>
        <taxon>Brassicaceae</taxon>
        <taxon>Camelineae</taxon>
        <taxon>Arabidopsis</taxon>
    </lineage>
</organism>
<evidence type="ECO:0000250" key="1">
    <source>
        <dbReference type="UniProtKB" id="P04798"/>
    </source>
</evidence>
<evidence type="ECO:0000255" key="2"/>
<evidence type="ECO:0000269" key="3">
    <source>
    </source>
</evidence>
<evidence type="ECO:0000303" key="4">
    <source>
    </source>
</evidence>
<evidence type="ECO:0000305" key="5"/>
<evidence type="ECO:0000305" key="6">
    <source>
    </source>
</evidence>
<evidence type="ECO:0000312" key="7">
    <source>
        <dbReference type="Araport" id="AT4G27710"/>
    </source>
</evidence>
<accession>Q9T093</accession>
<protein>
    <recommendedName>
        <fullName evidence="5">Cytochrome P450 709B3</fullName>
        <ecNumber evidence="5">1.14.-.-</ecNumber>
    </recommendedName>
</protein>